<protein>
    <recommendedName>
        <fullName>Uncharacterized lipoprotein RT0028</fullName>
    </recommendedName>
</protein>
<sequence length="1154" mass="132601">MKRNIFIKLLISLLLLSSCTGDTCIDPDDFGFIKFNVSSRYNPEEITSRHEGDQVAPWRDSAYKVNGYPLTIMVRPWNYILGDKNTSGQLSAWCPWYGQKNNTTTLAPFCIKLQPCTFWDNTRLDMCTPNPENRNDAMISNPPCIMTDGVGLYFLIAAKNTDPNISPDSQRKPQGITRHLGELTSSVGYEFYSISSTGQLLKAGGINYQYNGEDKSKYAQSPLYFKIIDKFYDDNSGQYRLVIKSGVSDTRPDPLQFLTDLIKDVLFGKNGIIKKTYQQIVDTPGYRISVSAILTLYIMFTGLSFLIGNINLTHVELIIRIFKISIISILLSSDKAWTFFHDYLFVFFIDGVQQILQIINEAAATGPGSQSLLGLLISTQTLSKLFSLLFVDWLGFIYIILYLIALYFIFFLIFKATIIYLTALITIGMMIIMGPIFICFMLFNITRSLFENWLRQLISYALQPIILFAGIAFISMIIRTEIYSTLGFGVCKHDFPNLGPINEIFGSFLEDIDPSLSNSIFYWWFPVPMKGGINNFHKAKILVPNDHIVVDDSCKNNHDKCKHCAAYECIDERYIELPFLDLVKDSTRINNFINGKFVQLDGILLIFVSIYLLSKFNDTAISTAQFIAGTSGNLTDIQKVNQQSYESVSQQINRPLNYVAKTISTPVTSRISAGTAQANMFFAEKFENMMMRRLEKQALSSSANKVVQNEVKRKYGIDSKDVNMNAIKDYEDGISRLLNNLPKGNELKVKELSQMKFTQLRDKISANKYDVQDYTTLSTEQKTELDKLLKDANLRVLASDANFTKDYQEAYKHAHQEMSGRGIGLFGKNIGVLRSWQEMEHSINVKRKLKEEKRIGIGEKIYAGYTGIKRAALTTIVGKDLRDAYEGNLTSAEWHDFEYNDPRLRTYSEKLKDDEKAREREKLRMHINKETLAVQADILSPEYLVKLEKAGRKSDVEYYQELAQRQLIYDVHSKLFEEGEPVMMGDRFMREKATDSQMRDMIDNAHKKYVELIDVDRYTRRQEYYDIIYEKAKENLEQTYKEVQDHFKRDNISIEEMPALIAQKVKDTNAGSEIDKKITEELNNFNADVKNYEYSTAVLNKIEDRKQTITDVVNVQIDKINKYRENAKMEQYVKPILNEGRKLRTLEDHFKNMK</sequence>
<proteinExistence type="inferred from homology"/>
<gene>
    <name type="ordered locus">RT0028</name>
</gene>
<organism>
    <name type="scientific">Rickettsia typhi (strain ATCC VR-144 / Wilmington)</name>
    <dbReference type="NCBI Taxonomy" id="257363"/>
    <lineage>
        <taxon>Bacteria</taxon>
        <taxon>Pseudomonadati</taxon>
        <taxon>Pseudomonadota</taxon>
        <taxon>Alphaproteobacteria</taxon>
        <taxon>Rickettsiales</taxon>
        <taxon>Rickettsiaceae</taxon>
        <taxon>Rickettsieae</taxon>
        <taxon>Rickettsia</taxon>
        <taxon>typhus group</taxon>
    </lineage>
</organism>
<dbReference type="EMBL" id="AE017197">
    <property type="protein sequence ID" value="AAU03516.1"/>
    <property type="molecule type" value="Genomic_DNA"/>
</dbReference>
<dbReference type="RefSeq" id="WP_011190503.1">
    <property type="nucleotide sequence ID" value="NC_006142.1"/>
</dbReference>
<dbReference type="SMR" id="Q68XX6"/>
<dbReference type="KEGG" id="rty:RT0028"/>
<dbReference type="eggNOG" id="COG1340">
    <property type="taxonomic scope" value="Bacteria"/>
</dbReference>
<dbReference type="eggNOG" id="COG3704">
    <property type="taxonomic scope" value="Bacteria"/>
</dbReference>
<dbReference type="HOGENOM" id="CLU_275941_0_0_5"/>
<dbReference type="OrthoDB" id="7163280at2"/>
<dbReference type="Proteomes" id="UP000000604">
    <property type="component" value="Chromosome"/>
</dbReference>
<dbReference type="GO" id="GO:0005886">
    <property type="term" value="C:plasma membrane"/>
    <property type="evidence" value="ECO:0007669"/>
    <property type="project" value="UniProtKB-SubCell"/>
</dbReference>
<dbReference type="GO" id="GO:0030255">
    <property type="term" value="P:protein secretion by the type IV secretion system"/>
    <property type="evidence" value="ECO:0007669"/>
    <property type="project" value="InterPro"/>
</dbReference>
<dbReference type="InterPro" id="IPR007688">
    <property type="entry name" value="Conjugal_tfr_TrbL/VirB6"/>
</dbReference>
<dbReference type="Pfam" id="PF04610">
    <property type="entry name" value="TrbL"/>
    <property type="match status" value="1"/>
</dbReference>
<dbReference type="PROSITE" id="PS51257">
    <property type="entry name" value="PROKAR_LIPOPROTEIN"/>
    <property type="match status" value="1"/>
</dbReference>
<evidence type="ECO:0000255" key="1"/>
<evidence type="ECO:0000255" key="2">
    <source>
        <dbReference type="PROSITE-ProRule" id="PRU00303"/>
    </source>
</evidence>
<evidence type="ECO:0000305" key="3"/>
<reference key="1">
    <citation type="journal article" date="2004" name="J. Bacteriol.">
        <title>Complete genome sequence of Rickettsia typhi and comparison with sequences of other Rickettsiae.</title>
        <authorList>
            <person name="McLeod M.P."/>
            <person name="Qin X."/>
            <person name="Karpathy S.E."/>
            <person name="Gioia J."/>
            <person name="Highlander S.K."/>
            <person name="Fox G.E."/>
            <person name="McNeill T.Z."/>
            <person name="Jiang H."/>
            <person name="Muzny D."/>
            <person name="Jacob L.S."/>
            <person name="Hawes A.C."/>
            <person name="Sodergren E."/>
            <person name="Gill R."/>
            <person name="Hume J."/>
            <person name="Morgan M."/>
            <person name="Fan G."/>
            <person name="Amin A.G."/>
            <person name="Gibbs R.A."/>
            <person name="Hong C."/>
            <person name="Yu X.-J."/>
            <person name="Walker D.H."/>
            <person name="Weinstock G.M."/>
        </authorList>
    </citation>
    <scope>NUCLEOTIDE SEQUENCE [LARGE SCALE GENOMIC DNA]</scope>
    <source>
        <strain>ATCC VR-144 / Wilmington</strain>
    </source>
</reference>
<keyword id="KW-1003">Cell membrane</keyword>
<keyword id="KW-0449">Lipoprotein</keyword>
<keyword id="KW-0472">Membrane</keyword>
<keyword id="KW-0564">Palmitate</keyword>
<keyword id="KW-0732">Signal</keyword>
<keyword id="KW-0812">Transmembrane</keyword>
<keyword id="KW-1133">Transmembrane helix</keyword>
<name>Y028_RICTY</name>
<accession>Q68XX6</accession>
<feature type="signal peptide" evidence="2">
    <location>
        <begin position="1"/>
        <end position="18"/>
    </location>
</feature>
<feature type="chain" id="PRO_0000269913" description="Uncharacterized lipoprotein RT0028">
    <location>
        <begin position="19"/>
        <end position="1154"/>
    </location>
</feature>
<feature type="transmembrane region" description="Helical" evidence="1">
    <location>
        <begin position="288"/>
        <end position="308"/>
    </location>
</feature>
<feature type="transmembrane region" description="Helical" evidence="1">
    <location>
        <begin position="394"/>
        <end position="414"/>
    </location>
</feature>
<feature type="transmembrane region" description="Helical" evidence="1">
    <location>
        <begin position="423"/>
        <end position="443"/>
    </location>
</feature>
<feature type="transmembrane region" description="Helical" evidence="1">
    <location>
        <begin position="458"/>
        <end position="478"/>
    </location>
</feature>
<feature type="lipid moiety-binding region" description="N-palmitoyl cysteine" evidence="2">
    <location>
        <position position="19"/>
    </location>
</feature>
<feature type="lipid moiety-binding region" description="S-diacylglycerol cysteine" evidence="2">
    <location>
        <position position="19"/>
    </location>
</feature>
<comment type="subcellular location">
    <subcellularLocation>
        <location evidence="2">Cell membrane</location>
        <topology evidence="3">Multi-pass membrane protein</topology>
    </subcellularLocation>
    <subcellularLocation>
        <location evidence="2">Cell membrane</location>
        <topology evidence="2">Lipid-anchor</topology>
    </subcellularLocation>
</comment>
<comment type="similarity">
    <text evidence="3">Belongs to the TrbL/VirB6 family.</text>
</comment>